<organism>
    <name type="scientific">Bacillus cytotoxicus (strain DSM 22905 / CIP 110041 / 391-98 / NVH 391-98)</name>
    <dbReference type="NCBI Taxonomy" id="315749"/>
    <lineage>
        <taxon>Bacteria</taxon>
        <taxon>Bacillati</taxon>
        <taxon>Bacillota</taxon>
        <taxon>Bacilli</taxon>
        <taxon>Bacillales</taxon>
        <taxon>Bacillaceae</taxon>
        <taxon>Bacillus</taxon>
        <taxon>Bacillus cereus group</taxon>
    </lineage>
</organism>
<name>KTHY_BACCN</name>
<keyword id="KW-0067">ATP-binding</keyword>
<keyword id="KW-0418">Kinase</keyword>
<keyword id="KW-0545">Nucleotide biosynthesis</keyword>
<keyword id="KW-0547">Nucleotide-binding</keyword>
<keyword id="KW-0808">Transferase</keyword>
<comment type="function">
    <text evidence="1">Phosphorylation of dTMP to form dTDP in both de novo and salvage pathways of dTTP synthesis.</text>
</comment>
<comment type="catalytic activity">
    <reaction evidence="1">
        <text>dTMP + ATP = dTDP + ADP</text>
        <dbReference type="Rhea" id="RHEA:13517"/>
        <dbReference type="ChEBI" id="CHEBI:30616"/>
        <dbReference type="ChEBI" id="CHEBI:58369"/>
        <dbReference type="ChEBI" id="CHEBI:63528"/>
        <dbReference type="ChEBI" id="CHEBI:456216"/>
        <dbReference type="EC" id="2.7.4.9"/>
    </reaction>
</comment>
<comment type="similarity">
    <text evidence="1">Belongs to the thymidylate kinase family.</text>
</comment>
<evidence type="ECO:0000255" key="1">
    <source>
        <dbReference type="HAMAP-Rule" id="MF_00165"/>
    </source>
</evidence>
<protein>
    <recommendedName>
        <fullName evidence="1">Thymidylate kinase</fullName>
        <ecNumber evidence="1">2.7.4.9</ecNumber>
    </recommendedName>
    <alternativeName>
        <fullName evidence="1">dTMP kinase</fullName>
    </alternativeName>
</protein>
<sequence>MKGLFVTIEGPEGSGKSTLITKLLPYFENKGQKVIATREPGGIAISEEIRTILHKKEYTTMEARTEALLYAAARRQHLVEKVMPALEADQLVLCDRFIDSSLAYQGYARGLGIDKVYEMNRFATEDCMPSLTIYLDIAPEVGLARIEKDAAREVNRLDMESIAFHRLVREGYLQIVERFKDRIVVVNADQPMENVVEEVIQLIESKLL</sequence>
<dbReference type="EC" id="2.7.4.9" evidence="1"/>
<dbReference type="EMBL" id="CP000764">
    <property type="protein sequence ID" value="ABS20400.1"/>
    <property type="molecule type" value="Genomic_DNA"/>
</dbReference>
<dbReference type="RefSeq" id="WP_011983170.1">
    <property type="nucleotide sequence ID" value="NC_009674.1"/>
</dbReference>
<dbReference type="SMR" id="A7GJU2"/>
<dbReference type="STRING" id="315749.Bcer98_0025"/>
<dbReference type="GeneID" id="33895329"/>
<dbReference type="KEGG" id="bcy:Bcer98_0025"/>
<dbReference type="eggNOG" id="COG0125">
    <property type="taxonomic scope" value="Bacteria"/>
</dbReference>
<dbReference type="HOGENOM" id="CLU_049131_0_2_9"/>
<dbReference type="OrthoDB" id="9774907at2"/>
<dbReference type="Proteomes" id="UP000002300">
    <property type="component" value="Chromosome"/>
</dbReference>
<dbReference type="GO" id="GO:0005829">
    <property type="term" value="C:cytosol"/>
    <property type="evidence" value="ECO:0007669"/>
    <property type="project" value="TreeGrafter"/>
</dbReference>
<dbReference type="GO" id="GO:0005524">
    <property type="term" value="F:ATP binding"/>
    <property type="evidence" value="ECO:0007669"/>
    <property type="project" value="UniProtKB-UniRule"/>
</dbReference>
<dbReference type="GO" id="GO:0004798">
    <property type="term" value="F:dTMP kinase activity"/>
    <property type="evidence" value="ECO:0007669"/>
    <property type="project" value="UniProtKB-UniRule"/>
</dbReference>
<dbReference type="GO" id="GO:0006233">
    <property type="term" value="P:dTDP biosynthetic process"/>
    <property type="evidence" value="ECO:0007669"/>
    <property type="project" value="InterPro"/>
</dbReference>
<dbReference type="GO" id="GO:0006235">
    <property type="term" value="P:dTTP biosynthetic process"/>
    <property type="evidence" value="ECO:0007669"/>
    <property type="project" value="UniProtKB-UniRule"/>
</dbReference>
<dbReference type="GO" id="GO:0006227">
    <property type="term" value="P:dUDP biosynthetic process"/>
    <property type="evidence" value="ECO:0007669"/>
    <property type="project" value="TreeGrafter"/>
</dbReference>
<dbReference type="CDD" id="cd01672">
    <property type="entry name" value="TMPK"/>
    <property type="match status" value="1"/>
</dbReference>
<dbReference type="FunFam" id="3.40.50.300:FF:000225">
    <property type="entry name" value="Thymidylate kinase"/>
    <property type="match status" value="1"/>
</dbReference>
<dbReference type="Gene3D" id="3.40.50.300">
    <property type="entry name" value="P-loop containing nucleotide triphosphate hydrolases"/>
    <property type="match status" value="1"/>
</dbReference>
<dbReference type="HAMAP" id="MF_00165">
    <property type="entry name" value="Thymidylate_kinase"/>
    <property type="match status" value="1"/>
</dbReference>
<dbReference type="InterPro" id="IPR027417">
    <property type="entry name" value="P-loop_NTPase"/>
</dbReference>
<dbReference type="InterPro" id="IPR039430">
    <property type="entry name" value="Thymidylate_kin-like_dom"/>
</dbReference>
<dbReference type="InterPro" id="IPR018095">
    <property type="entry name" value="Thymidylate_kin_CS"/>
</dbReference>
<dbReference type="InterPro" id="IPR018094">
    <property type="entry name" value="Thymidylate_kinase"/>
</dbReference>
<dbReference type="NCBIfam" id="TIGR00041">
    <property type="entry name" value="DTMP_kinase"/>
    <property type="match status" value="1"/>
</dbReference>
<dbReference type="PANTHER" id="PTHR10344">
    <property type="entry name" value="THYMIDYLATE KINASE"/>
    <property type="match status" value="1"/>
</dbReference>
<dbReference type="PANTHER" id="PTHR10344:SF4">
    <property type="entry name" value="UMP-CMP KINASE 2, MITOCHONDRIAL"/>
    <property type="match status" value="1"/>
</dbReference>
<dbReference type="Pfam" id="PF02223">
    <property type="entry name" value="Thymidylate_kin"/>
    <property type="match status" value="1"/>
</dbReference>
<dbReference type="SUPFAM" id="SSF52540">
    <property type="entry name" value="P-loop containing nucleoside triphosphate hydrolases"/>
    <property type="match status" value="1"/>
</dbReference>
<dbReference type="PROSITE" id="PS01331">
    <property type="entry name" value="THYMIDYLATE_KINASE"/>
    <property type="match status" value="1"/>
</dbReference>
<feature type="chain" id="PRO_1000076957" description="Thymidylate kinase">
    <location>
        <begin position="1"/>
        <end position="208"/>
    </location>
</feature>
<feature type="binding site" evidence="1">
    <location>
        <begin position="10"/>
        <end position="17"/>
    </location>
    <ligand>
        <name>ATP</name>
        <dbReference type="ChEBI" id="CHEBI:30616"/>
    </ligand>
</feature>
<reference key="1">
    <citation type="journal article" date="2008" name="Chem. Biol. Interact.">
        <title>Extending the Bacillus cereus group genomics to putative food-borne pathogens of different toxicity.</title>
        <authorList>
            <person name="Lapidus A."/>
            <person name="Goltsman E."/>
            <person name="Auger S."/>
            <person name="Galleron N."/>
            <person name="Segurens B."/>
            <person name="Dossat C."/>
            <person name="Land M.L."/>
            <person name="Broussolle V."/>
            <person name="Brillard J."/>
            <person name="Guinebretiere M.-H."/>
            <person name="Sanchis V."/>
            <person name="Nguen-the C."/>
            <person name="Lereclus D."/>
            <person name="Richardson P."/>
            <person name="Wincker P."/>
            <person name="Weissenbach J."/>
            <person name="Ehrlich S.D."/>
            <person name="Sorokin A."/>
        </authorList>
    </citation>
    <scope>NUCLEOTIDE SEQUENCE [LARGE SCALE GENOMIC DNA]</scope>
    <source>
        <strain>DSM 22905 / CIP 110041 / 391-98 / NVH 391-98</strain>
    </source>
</reference>
<proteinExistence type="inferred from homology"/>
<accession>A7GJU2</accession>
<gene>
    <name evidence="1" type="primary">tmk</name>
    <name type="ordered locus">Bcer98_0025</name>
</gene>